<reference key="1">
    <citation type="submission" date="2000-04" db="EMBL/GenBank/DDBJ databases">
        <title>Molecular cloning of elicitor inducible genes of tobacco.</title>
        <authorList>
            <person name="Takemoto D."/>
            <person name="Kawakita K."/>
        </authorList>
    </citation>
    <scope>NUCLEOTIDE SEQUENCE [MRNA]</scope>
</reference>
<dbReference type="EC" id="1.11.1.12"/>
<dbReference type="EMBL" id="AB041518">
    <property type="protein sequence ID" value="BAB16430.1"/>
    <property type="molecule type" value="mRNA"/>
</dbReference>
<dbReference type="SMR" id="Q9FXS3"/>
<dbReference type="STRING" id="4097.Q9FXS3"/>
<dbReference type="PeroxiBase" id="2869">
    <property type="entry name" value="NtGPx06-1A"/>
</dbReference>
<dbReference type="PaxDb" id="4097-Q9FXS3"/>
<dbReference type="Proteomes" id="UP000084051">
    <property type="component" value="Unplaced"/>
</dbReference>
<dbReference type="GO" id="GO:0005829">
    <property type="term" value="C:cytosol"/>
    <property type="evidence" value="ECO:0000318"/>
    <property type="project" value="GO_Central"/>
</dbReference>
<dbReference type="GO" id="GO:0004601">
    <property type="term" value="F:peroxidase activity"/>
    <property type="evidence" value="ECO:0000318"/>
    <property type="project" value="GO_Central"/>
</dbReference>
<dbReference type="GO" id="GO:0047066">
    <property type="term" value="F:phospholipid-hydroperoxide glutathione peroxidase activity"/>
    <property type="evidence" value="ECO:0007669"/>
    <property type="project" value="UniProtKB-EC"/>
</dbReference>
<dbReference type="GO" id="GO:0006979">
    <property type="term" value="P:response to oxidative stress"/>
    <property type="evidence" value="ECO:0007669"/>
    <property type="project" value="InterPro"/>
</dbReference>
<dbReference type="CDD" id="cd00340">
    <property type="entry name" value="GSH_Peroxidase"/>
    <property type="match status" value="1"/>
</dbReference>
<dbReference type="FunFam" id="3.40.30.10:FF:000025">
    <property type="entry name" value="Glutathione peroxidase"/>
    <property type="match status" value="1"/>
</dbReference>
<dbReference type="Gene3D" id="3.40.30.10">
    <property type="entry name" value="Glutaredoxin"/>
    <property type="match status" value="1"/>
</dbReference>
<dbReference type="InterPro" id="IPR000889">
    <property type="entry name" value="Glutathione_peroxidase"/>
</dbReference>
<dbReference type="InterPro" id="IPR029759">
    <property type="entry name" value="GPX_AS"/>
</dbReference>
<dbReference type="InterPro" id="IPR029760">
    <property type="entry name" value="GPX_CS"/>
</dbReference>
<dbReference type="InterPro" id="IPR036249">
    <property type="entry name" value="Thioredoxin-like_sf"/>
</dbReference>
<dbReference type="InterPro" id="IPR013766">
    <property type="entry name" value="Thioredoxin_domain"/>
</dbReference>
<dbReference type="PANTHER" id="PTHR11592">
    <property type="entry name" value="GLUTATHIONE PEROXIDASE"/>
    <property type="match status" value="1"/>
</dbReference>
<dbReference type="PANTHER" id="PTHR11592:SF92">
    <property type="entry name" value="PHOSPHOLIPID HYDROPEROXIDE GLUTATHIONE PEROXIDASE-RELATED"/>
    <property type="match status" value="1"/>
</dbReference>
<dbReference type="Pfam" id="PF00255">
    <property type="entry name" value="GSHPx"/>
    <property type="match status" value="1"/>
</dbReference>
<dbReference type="PIRSF" id="PIRSF000303">
    <property type="entry name" value="Glutathion_perox"/>
    <property type="match status" value="1"/>
</dbReference>
<dbReference type="PRINTS" id="PR01011">
    <property type="entry name" value="GLUTPROXDASE"/>
</dbReference>
<dbReference type="SUPFAM" id="SSF52833">
    <property type="entry name" value="Thioredoxin-like"/>
    <property type="match status" value="1"/>
</dbReference>
<dbReference type="PROSITE" id="PS00460">
    <property type="entry name" value="GLUTATHIONE_PEROXID_1"/>
    <property type="match status" value="1"/>
</dbReference>
<dbReference type="PROSITE" id="PS00763">
    <property type="entry name" value="GLUTATHIONE_PEROXID_2"/>
    <property type="match status" value="1"/>
</dbReference>
<dbReference type="PROSITE" id="PS51355">
    <property type="entry name" value="GLUTATHIONE_PEROXID_3"/>
    <property type="match status" value="1"/>
</dbReference>
<accession>Q9FXS3</accession>
<comment type="function">
    <text evidence="1">Protects cells and enzymes from oxidative damage, by catalyzing the reduction of hydrogen peroxide, lipid peroxides and organic hydroperoxide, by glutathione.</text>
</comment>
<comment type="catalytic activity">
    <reaction evidence="2">
        <text>a hydroperoxy polyunsaturated fatty acid + 2 glutathione = a hydroxy polyunsaturated fatty acid + glutathione disulfide + H2O</text>
        <dbReference type="Rhea" id="RHEA:19057"/>
        <dbReference type="ChEBI" id="CHEBI:15377"/>
        <dbReference type="ChEBI" id="CHEBI:57925"/>
        <dbReference type="ChEBI" id="CHEBI:58297"/>
        <dbReference type="ChEBI" id="CHEBI:131871"/>
        <dbReference type="ChEBI" id="CHEBI:134019"/>
        <dbReference type="EC" id="1.11.1.12"/>
    </reaction>
</comment>
<comment type="subcellular location">
    <subcellularLocation>
        <location evidence="3">Cytoplasm</location>
    </subcellularLocation>
</comment>
<comment type="induction">
    <text>By fungal elicitor.</text>
</comment>
<comment type="similarity">
    <text evidence="3">Belongs to the glutathione peroxidase family.</text>
</comment>
<protein>
    <recommendedName>
        <fullName>Probable phospholipid hydroperoxide glutathione peroxidase</fullName>
        <shortName>PHGPx</shortName>
        <ecNumber>1.11.1.12</ecNumber>
    </recommendedName>
    <alternativeName>
        <fullName>Nt-SubC08</fullName>
    </alternativeName>
</protein>
<name>GPX4_TOBAC</name>
<proteinExistence type="evidence at transcript level"/>
<sequence>MASQSSKPQSIYDFTVKDAKGNDVDLSIYKGKVLIIVNVASQCGLTNSNYTDMTEIYKKYKDQGLEILAFPCNQFGGQEPGSIEEIQNMVCTRFKAEYPIFDKVDVNGDNAAPLYKFLKSSKGGFFGDSIKWNFSKFLVDKEGNVVDRYSPTTTPASMEKDIKKLLGVA</sequence>
<organism>
    <name type="scientific">Nicotiana tabacum</name>
    <name type="common">Common tobacco</name>
    <dbReference type="NCBI Taxonomy" id="4097"/>
    <lineage>
        <taxon>Eukaryota</taxon>
        <taxon>Viridiplantae</taxon>
        <taxon>Streptophyta</taxon>
        <taxon>Embryophyta</taxon>
        <taxon>Tracheophyta</taxon>
        <taxon>Spermatophyta</taxon>
        <taxon>Magnoliopsida</taxon>
        <taxon>eudicotyledons</taxon>
        <taxon>Gunneridae</taxon>
        <taxon>Pentapetalae</taxon>
        <taxon>asterids</taxon>
        <taxon>lamiids</taxon>
        <taxon>Solanales</taxon>
        <taxon>Solanaceae</taxon>
        <taxon>Nicotianoideae</taxon>
        <taxon>Nicotianeae</taxon>
        <taxon>Nicotiana</taxon>
    </lineage>
</organism>
<feature type="chain" id="PRO_0000066636" description="Probable phospholipid hydroperoxide glutathione peroxidase">
    <location>
        <begin position="1"/>
        <end position="169"/>
    </location>
</feature>
<feature type="active site" evidence="2">
    <location>
        <position position="43"/>
    </location>
</feature>
<keyword id="KW-0963">Cytoplasm</keyword>
<keyword id="KW-0560">Oxidoreductase</keyword>
<keyword id="KW-0575">Peroxidase</keyword>
<keyword id="KW-1185">Reference proteome</keyword>
<evidence type="ECO:0000250" key="1">
    <source>
        <dbReference type="UniProtKB" id="O70325"/>
    </source>
</evidence>
<evidence type="ECO:0000250" key="2">
    <source>
        <dbReference type="UniProtKB" id="P36968"/>
    </source>
</evidence>
<evidence type="ECO:0000305" key="3"/>